<reference key="1">
    <citation type="submission" date="2006-08" db="EMBL/GenBank/DDBJ databases">
        <title>Complete sequence of chromosome 1 of Shewanella sp. MR-7.</title>
        <authorList>
            <person name="Copeland A."/>
            <person name="Lucas S."/>
            <person name="Lapidus A."/>
            <person name="Barry K."/>
            <person name="Detter J.C."/>
            <person name="Glavina del Rio T."/>
            <person name="Hammon N."/>
            <person name="Israni S."/>
            <person name="Dalin E."/>
            <person name="Tice H."/>
            <person name="Pitluck S."/>
            <person name="Kiss H."/>
            <person name="Brettin T."/>
            <person name="Bruce D."/>
            <person name="Han C."/>
            <person name="Tapia R."/>
            <person name="Gilna P."/>
            <person name="Schmutz J."/>
            <person name="Larimer F."/>
            <person name="Land M."/>
            <person name="Hauser L."/>
            <person name="Kyrpides N."/>
            <person name="Mikhailova N."/>
            <person name="Nealson K."/>
            <person name="Konstantinidis K."/>
            <person name="Klappenbach J."/>
            <person name="Tiedje J."/>
            <person name="Richardson P."/>
        </authorList>
    </citation>
    <scope>NUCLEOTIDE SEQUENCE [LARGE SCALE GENOMIC DNA]</scope>
    <source>
        <strain>MR-7</strain>
    </source>
</reference>
<keyword id="KW-0067">ATP-binding</keyword>
<keyword id="KW-0173">Coenzyme A biosynthesis</keyword>
<keyword id="KW-0963">Cytoplasm</keyword>
<keyword id="KW-0460">Magnesium</keyword>
<keyword id="KW-0547">Nucleotide-binding</keyword>
<keyword id="KW-0548">Nucleotidyltransferase</keyword>
<keyword id="KW-0808">Transferase</keyword>
<accession>Q0HPJ5</accession>
<dbReference type="EC" id="2.7.7.3" evidence="1"/>
<dbReference type="EMBL" id="CP000444">
    <property type="protein sequence ID" value="ABI44960.1"/>
    <property type="molecule type" value="Genomic_DNA"/>
</dbReference>
<dbReference type="SMR" id="Q0HPJ5"/>
<dbReference type="KEGG" id="shm:Shewmr7_3983"/>
<dbReference type="HOGENOM" id="CLU_100149_0_1_6"/>
<dbReference type="UniPathway" id="UPA00241">
    <property type="reaction ID" value="UER00355"/>
</dbReference>
<dbReference type="GO" id="GO:0005737">
    <property type="term" value="C:cytoplasm"/>
    <property type="evidence" value="ECO:0007669"/>
    <property type="project" value="UniProtKB-SubCell"/>
</dbReference>
<dbReference type="GO" id="GO:0005524">
    <property type="term" value="F:ATP binding"/>
    <property type="evidence" value="ECO:0007669"/>
    <property type="project" value="UniProtKB-KW"/>
</dbReference>
<dbReference type="GO" id="GO:0004595">
    <property type="term" value="F:pantetheine-phosphate adenylyltransferase activity"/>
    <property type="evidence" value="ECO:0007669"/>
    <property type="project" value="UniProtKB-UniRule"/>
</dbReference>
<dbReference type="GO" id="GO:0015937">
    <property type="term" value="P:coenzyme A biosynthetic process"/>
    <property type="evidence" value="ECO:0007669"/>
    <property type="project" value="UniProtKB-UniRule"/>
</dbReference>
<dbReference type="CDD" id="cd02163">
    <property type="entry name" value="PPAT"/>
    <property type="match status" value="1"/>
</dbReference>
<dbReference type="FunFam" id="3.40.50.620:FF:000012">
    <property type="entry name" value="Phosphopantetheine adenylyltransferase"/>
    <property type="match status" value="1"/>
</dbReference>
<dbReference type="Gene3D" id="3.40.50.620">
    <property type="entry name" value="HUPs"/>
    <property type="match status" value="1"/>
</dbReference>
<dbReference type="HAMAP" id="MF_00151">
    <property type="entry name" value="PPAT_bact"/>
    <property type="match status" value="1"/>
</dbReference>
<dbReference type="InterPro" id="IPR004821">
    <property type="entry name" value="Cyt_trans-like"/>
</dbReference>
<dbReference type="InterPro" id="IPR001980">
    <property type="entry name" value="PPAT"/>
</dbReference>
<dbReference type="InterPro" id="IPR014729">
    <property type="entry name" value="Rossmann-like_a/b/a_fold"/>
</dbReference>
<dbReference type="NCBIfam" id="TIGR01510">
    <property type="entry name" value="coaD_prev_kdtB"/>
    <property type="match status" value="1"/>
</dbReference>
<dbReference type="NCBIfam" id="TIGR00125">
    <property type="entry name" value="cyt_tran_rel"/>
    <property type="match status" value="1"/>
</dbReference>
<dbReference type="PANTHER" id="PTHR21342">
    <property type="entry name" value="PHOSPHOPANTETHEINE ADENYLYLTRANSFERASE"/>
    <property type="match status" value="1"/>
</dbReference>
<dbReference type="PANTHER" id="PTHR21342:SF1">
    <property type="entry name" value="PHOSPHOPANTETHEINE ADENYLYLTRANSFERASE"/>
    <property type="match status" value="1"/>
</dbReference>
<dbReference type="Pfam" id="PF01467">
    <property type="entry name" value="CTP_transf_like"/>
    <property type="match status" value="1"/>
</dbReference>
<dbReference type="PRINTS" id="PR01020">
    <property type="entry name" value="LPSBIOSNTHSS"/>
</dbReference>
<dbReference type="SUPFAM" id="SSF52374">
    <property type="entry name" value="Nucleotidylyl transferase"/>
    <property type="match status" value="1"/>
</dbReference>
<evidence type="ECO:0000255" key="1">
    <source>
        <dbReference type="HAMAP-Rule" id="MF_00151"/>
    </source>
</evidence>
<gene>
    <name evidence="1" type="primary">coaD</name>
    <name type="ordered locus">Shewmr7_3983</name>
</gene>
<sequence>MHTRAIYPGTFDPITNGHADLIERAAKLFKHVIIGIAANPSKQPRFTLEERVELVNRVTAHLDNVEVVGFSGLLVDFAKEQRASVLVRGLRAVSDFEYEFQLANMNRRLSPDLESVFLTPAEENSFISSTLVKEVALHGGDVSQFVHPEVASALAAKLNLAKA</sequence>
<comment type="function">
    <text evidence="1">Reversibly transfers an adenylyl group from ATP to 4'-phosphopantetheine, yielding dephospho-CoA (dPCoA) and pyrophosphate.</text>
</comment>
<comment type="catalytic activity">
    <reaction evidence="1">
        <text>(R)-4'-phosphopantetheine + ATP + H(+) = 3'-dephospho-CoA + diphosphate</text>
        <dbReference type="Rhea" id="RHEA:19801"/>
        <dbReference type="ChEBI" id="CHEBI:15378"/>
        <dbReference type="ChEBI" id="CHEBI:30616"/>
        <dbReference type="ChEBI" id="CHEBI:33019"/>
        <dbReference type="ChEBI" id="CHEBI:57328"/>
        <dbReference type="ChEBI" id="CHEBI:61723"/>
        <dbReference type="EC" id="2.7.7.3"/>
    </reaction>
</comment>
<comment type="cofactor">
    <cofactor evidence="1">
        <name>Mg(2+)</name>
        <dbReference type="ChEBI" id="CHEBI:18420"/>
    </cofactor>
</comment>
<comment type="pathway">
    <text evidence="1">Cofactor biosynthesis; coenzyme A biosynthesis; CoA from (R)-pantothenate: step 4/5.</text>
</comment>
<comment type="subunit">
    <text evidence="1">Homohexamer.</text>
</comment>
<comment type="subcellular location">
    <subcellularLocation>
        <location evidence="1">Cytoplasm</location>
    </subcellularLocation>
</comment>
<comment type="similarity">
    <text evidence="1">Belongs to the bacterial CoaD family.</text>
</comment>
<protein>
    <recommendedName>
        <fullName evidence="1">Phosphopantetheine adenylyltransferase</fullName>
        <ecNumber evidence="1">2.7.7.3</ecNumber>
    </recommendedName>
    <alternativeName>
        <fullName evidence="1">Dephospho-CoA pyrophosphorylase</fullName>
    </alternativeName>
    <alternativeName>
        <fullName evidence="1">Pantetheine-phosphate adenylyltransferase</fullName>
        <shortName evidence="1">PPAT</shortName>
    </alternativeName>
</protein>
<organism>
    <name type="scientific">Shewanella sp. (strain MR-7)</name>
    <dbReference type="NCBI Taxonomy" id="60481"/>
    <lineage>
        <taxon>Bacteria</taxon>
        <taxon>Pseudomonadati</taxon>
        <taxon>Pseudomonadota</taxon>
        <taxon>Gammaproteobacteria</taxon>
        <taxon>Alteromonadales</taxon>
        <taxon>Shewanellaceae</taxon>
        <taxon>Shewanella</taxon>
    </lineage>
</organism>
<name>COAD_SHESR</name>
<feature type="chain" id="PRO_1000011236" description="Phosphopantetheine adenylyltransferase">
    <location>
        <begin position="1"/>
        <end position="163"/>
    </location>
</feature>
<feature type="binding site" evidence="1">
    <location>
        <begin position="10"/>
        <end position="11"/>
    </location>
    <ligand>
        <name>ATP</name>
        <dbReference type="ChEBI" id="CHEBI:30616"/>
    </ligand>
</feature>
<feature type="binding site" evidence="1">
    <location>
        <position position="10"/>
    </location>
    <ligand>
        <name>substrate</name>
    </ligand>
</feature>
<feature type="binding site" evidence="1">
    <location>
        <position position="18"/>
    </location>
    <ligand>
        <name>ATP</name>
        <dbReference type="ChEBI" id="CHEBI:30616"/>
    </ligand>
</feature>
<feature type="binding site" evidence="1">
    <location>
        <position position="42"/>
    </location>
    <ligand>
        <name>substrate</name>
    </ligand>
</feature>
<feature type="binding site" evidence="1">
    <location>
        <position position="74"/>
    </location>
    <ligand>
        <name>substrate</name>
    </ligand>
</feature>
<feature type="binding site" evidence="1">
    <location>
        <position position="88"/>
    </location>
    <ligand>
        <name>substrate</name>
    </ligand>
</feature>
<feature type="binding site" evidence="1">
    <location>
        <begin position="89"/>
        <end position="91"/>
    </location>
    <ligand>
        <name>ATP</name>
        <dbReference type="ChEBI" id="CHEBI:30616"/>
    </ligand>
</feature>
<feature type="binding site" evidence="1">
    <location>
        <position position="99"/>
    </location>
    <ligand>
        <name>ATP</name>
        <dbReference type="ChEBI" id="CHEBI:30616"/>
    </ligand>
</feature>
<feature type="binding site" evidence="1">
    <location>
        <begin position="124"/>
        <end position="130"/>
    </location>
    <ligand>
        <name>ATP</name>
        <dbReference type="ChEBI" id="CHEBI:30616"/>
    </ligand>
</feature>
<feature type="site" description="Transition state stabilizer" evidence="1">
    <location>
        <position position="18"/>
    </location>
</feature>
<proteinExistence type="inferred from homology"/>